<gene>
    <name type="primary">fabD</name>
    <name type="ordered locus">slr2023</name>
</gene>
<feature type="chain" id="PRO_0000194227" description="Malonyl CoA-acyl carrier protein transacylase">
    <location>
        <begin position="1"/>
        <end position="293"/>
    </location>
</feature>
<feature type="active site" evidence="1">
    <location>
        <position position="88"/>
    </location>
</feature>
<feature type="active site" evidence="1">
    <location>
        <position position="188"/>
    </location>
</feature>
<feature type="strand" evidence="3">
    <location>
        <begin position="3"/>
        <end position="7"/>
    </location>
</feature>
<feature type="turn" evidence="3">
    <location>
        <begin position="15"/>
        <end position="18"/>
    </location>
</feature>
<feature type="helix" evidence="3">
    <location>
        <begin position="19"/>
        <end position="23"/>
    </location>
</feature>
<feature type="helix" evidence="3">
    <location>
        <begin position="25"/>
        <end position="38"/>
    </location>
</feature>
<feature type="helix" evidence="3">
    <location>
        <begin position="42"/>
        <end position="46"/>
    </location>
</feature>
<feature type="helix" evidence="3">
    <location>
        <begin position="50"/>
        <end position="54"/>
    </location>
</feature>
<feature type="helix" evidence="3">
    <location>
        <begin position="56"/>
        <end position="76"/>
    </location>
</feature>
<feature type="strand" evidence="3">
    <location>
        <begin position="82"/>
        <end position="87"/>
    </location>
</feature>
<feature type="helix" evidence="3">
    <location>
        <begin position="90"/>
        <end position="97"/>
    </location>
</feature>
<feature type="helix" evidence="3">
    <location>
        <begin position="103"/>
        <end position="119"/>
    </location>
</feature>
<feature type="strand" evidence="3">
    <location>
        <begin position="124"/>
        <end position="131"/>
    </location>
</feature>
<feature type="helix" evidence="3">
    <location>
        <begin position="133"/>
        <end position="140"/>
    </location>
</feature>
<feature type="strand" evidence="3">
    <location>
        <begin position="144"/>
        <end position="153"/>
    </location>
</feature>
<feature type="strand" evidence="3">
    <location>
        <begin position="156"/>
        <end position="161"/>
    </location>
</feature>
<feature type="helix" evidence="3">
    <location>
        <begin position="163"/>
        <end position="171"/>
    </location>
</feature>
<feature type="strand" evidence="3">
    <location>
        <begin position="173"/>
        <end position="176"/>
    </location>
</feature>
<feature type="strand" evidence="3">
    <location>
        <begin position="178"/>
        <end position="180"/>
    </location>
</feature>
<feature type="helix" evidence="3">
    <location>
        <begin position="190"/>
        <end position="192"/>
    </location>
</feature>
<feature type="helix" evidence="3">
    <location>
        <begin position="193"/>
        <end position="204"/>
    </location>
</feature>
<feature type="strand" evidence="3">
    <location>
        <begin position="215"/>
        <end position="217"/>
    </location>
</feature>
<feature type="strand" evidence="3">
    <location>
        <begin position="220"/>
        <end position="224"/>
    </location>
</feature>
<feature type="helix" evidence="3">
    <location>
        <begin position="227"/>
        <end position="235"/>
    </location>
</feature>
<feature type="turn" evidence="3">
    <location>
        <begin position="236"/>
        <end position="239"/>
    </location>
</feature>
<feature type="helix" evidence="3">
    <location>
        <begin position="244"/>
        <end position="254"/>
    </location>
</feature>
<feature type="strand" evidence="3">
    <location>
        <begin position="258"/>
        <end position="266"/>
    </location>
</feature>
<feature type="helix" evidence="3">
    <location>
        <begin position="267"/>
        <end position="273"/>
    </location>
</feature>
<feature type="strand" evidence="3">
    <location>
        <begin position="279"/>
        <end position="284"/>
    </location>
</feature>
<feature type="helix" evidence="3">
    <location>
        <begin position="287"/>
        <end position="291"/>
    </location>
</feature>
<organism>
    <name type="scientific">Synechocystis sp. (strain ATCC 27184 / PCC 6803 / Kazusa)</name>
    <dbReference type="NCBI Taxonomy" id="1111708"/>
    <lineage>
        <taxon>Bacteria</taxon>
        <taxon>Bacillati</taxon>
        <taxon>Cyanobacteriota</taxon>
        <taxon>Cyanophyceae</taxon>
        <taxon>Synechococcales</taxon>
        <taxon>Merismopediaceae</taxon>
        <taxon>Synechocystis</taxon>
    </lineage>
</organism>
<keyword id="KW-0002">3D-structure</keyword>
<keyword id="KW-0012">Acyltransferase</keyword>
<keyword id="KW-0275">Fatty acid biosynthesis</keyword>
<keyword id="KW-0276">Fatty acid metabolism</keyword>
<keyword id="KW-0444">Lipid biosynthesis</keyword>
<keyword id="KW-0443">Lipid metabolism</keyword>
<keyword id="KW-1185">Reference proteome</keyword>
<keyword id="KW-0808">Transferase</keyword>
<protein>
    <recommendedName>
        <fullName>Malonyl CoA-acyl carrier protein transacylase</fullName>
        <shortName>MCT</shortName>
        <ecNumber>2.3.1.39</ecNumber>
    </recommendedName>
</protein>
<comment type="catalytic activity">
    <reaction>
        <text>holo-[ACP] + malonyl-CoA = malonyl-[ACP] + CoA</text>
        <dbReference type="Rhea" id="RHEA:41792"/>
        <dbReference type="Rhea" id="RHEA-COMP:9623"/>
        <dbReference type="Rhea" id="RHEA-COMP:9685"/>
        <dbReference type="ChEBI" id="CHEBI:57287"/>
        <dbReference type="ChEBI" id="CHEBI:57384"/>
        <dbReference type="ChEBI" id="CHEBI:64479"/>
        <dbReference type="ChEBI" id="CHEBI:78449"/>
        <dbReference type="EC" id="2.3.1.39"/>
    </reaction>
</comment>
<comment type="pathway">
    <text>Lipid metabolism; fatty acid biosynthesis.</text>
</comment>
<comment type="similarity">
    <text evidence="2">Belongs to the FabD family.</text>
</comment>
<name>FABD_SYNY3</name>
<dbReference type="EC" id="2.3.1.39"/>
<dbReference type="EMBL" id="BA000022">
    <property type="protein sequence ID" value="BAA17269.1"/>
    <property type="molecule type" value="Genomic_DNA"/>
</dbReference>
<dbReference type="PIR" id="S75355">
    <property type="entry name" value="S75355"/>
</dbReference>
<dbReference type="PDB" id="4RR5">
    <property type="method" value="X-ray"/>
    <property type="resolution" value="2.43 A"/>
    <property type="chains" value="A=1-293"/>
</dbReference>
<dbReference type="PDBsum" id="4RR5"/>
<dbReference type="SMR" id="P73242"/>
<dbReference type="FunCoup" id="P73242">
    <property type="interactions" value="202"/>
</dbReference>
<dbReference type="STRING" id="1148.gene:10498132"/>
<dbReference type="PaxDb" id="1148-1652346"/>
<dbReference type="EnsemblBacteria" id="BAA17269">
    <property type="protein sequence ID" value="BAA17269"/>
    <property type="gene ID" value="BAA17269"/>
</dbReference>
<dbReference type="KEGG" id="syn:slr2023"/>
<dbReference type="eggNOG" id="COG0331">
    <property type="taxonomic scope" value="Bacteria"/>
</dbReference>
<dbReference type="InParanoid" id="P73242"/>
<dbReference type="PhylomeDB" id="P73242"/>
<dbReference type="BRENDA" id="2.3.1.39">
    <property type="organism ID" value="382"/>
</dbReference>
<dbReference type="UniPathway" id="UPA00094"/>
<dbReference type="EvolutionaryTrace" id="P73242"/>
<dbReference type="Proteomes" id="UP000001425">
    <property type="component" value="Chromosome"/>
</dbReference>
<dbReference type="GO" id="GO:0005829">
    <property type="term" value="C:cytosol"/>
    <property type="evidence" value="ECO:0000318"/>
    <property type="project" value="GO_Central"/>
</dbReference>
<dbReference type="GO" id="GO:0004314">
    <property type="term" value="F:[acyl-carrier-protein] S-malonyltransferase activity"/>
    <property type="evidence" value="ECO:0000318"/>
    <property type="project" value="GO_Central"/>
</dbReference>
<dbReference type="GO" id="GO:0006633">
    <property type="term" value="P:fatty acid biosynthetic process"/>
    <property type="evidence" value="ECO:0000318"/>
    <property type="project" value="GO_Central"/>
</dbReference>
<dbReference type="Gene3D" id="3.30.70.250">
    <property type="entry name" value="Malonyl-CoA ACP transacylase, ACP-binding"/>
    <property type="match status" value="1"/>
</dbReference>
<dbReference type="Gene3D" id="3.40.366.10">
    <property type="entry name" value="Malonyl-Coenzyme A Acyl Carrier Protein, domain 2"/>
    <property type="match status" value="1"/>
</dbReference>
<dbReference type="InterPro" id="IPR001227">
    <property type="entry name" value="Ac_transferase_dom_sf"/>
</dbReference>
<dbReference type="InterPro" id="IPR014043">
    <property type="entry name" value="Acyl_transferase_dom"/>
</dbReference>
<dbReference type="InterPro" id="IPR016035">
    <property type="entry name" value="Acyl_Trfase/lysoPLipase"/>
</dbReference>
<dbReference type="InterPro" id="IPR050858">
    <property type="entry name" value="Mal-CoA-ACP_Trans/PKS_FabD"/>
</dbReference>
<dbReference type="InterPro" id="IPR024925">
    <property type="entry name" value="Malonyl_CoA-ACP_transAc"/>
</dbReference>
<dbReference type="InterPro" id="IPR004410">
    <property type="entry name" value="Malonyl_CoA-ACP_transAc_FabD"/>
</dbReference>
<dbReference type="InterPro" id="IPR016036">
    <property type="entry name" value="Malonyl_transacylase_ACP-bd"/>
</dbReference>
<dbReference type="NCBIfam" id="TIGR00128">
    <property type="entry name" value="fabD"/>
    <property type="match status" value="1"/>
</dbReference>
<dbReference type="PANTHER" id="PTHR42681">
    <property type="entry name" value="MALONYL-COA-ACYL CARRIER PROTEIN TRANSACYLASE, MITOCHONDRIAL"/>
    <property type="match status" value="1"/>
</dbReference>
<dbReference type="PANTHER" id="PTHR42681:SF1">
    <property type="entry name" value="MALONYL-COA-ACYL CARRIER PROTEIN TRANSACYLASE, MITOCHONDRIAL"/>
    <property type="match status" value="1"/>
</dbReference>
<dbReference type="Pfam" id="PF00698">
    <property type="entry name" value="Acyl_transf_1"/>
    <property type="match status" value="1"/>
</dbReference>
<dbReference type="PIRSF" id="PIRSF000446">
    <property type="entry name" value="Mct"/>
    <property type="match status" value="1"/>
</dbReference>
<dbReference type="SMART" id="SM00827">
    <property type="entry name" value="PKS_AT"/>
    <property type="match status" value="1"/>
</dbReference>
<dbReference type="SUPFAM" id="SSF52151">
    <property type="entry name" value="FabD/lysophospholipase-like"/>
    <property type="match status" value="1"/>
</dbReference>
<dbReference type="SUPFAM" id="SSF55048">
    <property type="entry name" value="Probable ACP-binding domain of malonyl-CoA ACP transacylase"/>
    <property type="match status" value="1"/>
</dbReference>
<proteinExistence type="evidence at protein level"/>
<accession>P73242</accession>
<sequence>MKTAWVFPGQGSQAVGMGVDLLSTAIAKEKYQQAEEILGWSVVEKCQGDEASLALTQNTQPCLYVIEAILADLLRDKGFQPDYVAGHSLGEYSALYAAGVFDFATGLQLVKQRSEVMASASGGMMAALMKFDQTQLQQALTDNTEVVLANDNSPEQVVISGTVAGVEAILANVKARRAVPLKVSGAFHSSFMAQPSQSFAQTLTACHFNDATVPVLSNVDPSPTQNGDRLKEKLIQQMTGSVRWRETMVNLGEIGATDYWEVGPGKVLTGLCKRTCPDLNLKNIGQLDDLNSL</sequence>
<evidence type="ECO:0000250" key="1"/>
<evidence type="ECO:0000305" key="2"/>
<evidence type="ECO:0007829" key="3">
    <source>
        <dbReference type="PDB" id="4RR5"/>
    </source>
</evidence>
<reference key="1">
    <citation type="journal article" date="1996" name="DNA Res.">
        <title>Sequence analysis of the genome of the unicellular cyanobacterium Synechocystis sp. strain PCC6803. II. Sequence determination of the entire genome and assignment of potential protein-coding regions.</title>
        <authorList>
            <person name="Kaneko T."/>
            <person name="Sato S."/>
            <person name="Kotani H."/>
            <person name="Tanaka A."/>
            <person name="Asamizu E."/>
            <person name="Nakamura Y."/>
            <person name="Miyajima N."/>
            <person name="Hirosawa M."/>
            <person name="Sugiura M."/>
            <person name="Sasamoto S."/>
            <person name="Kimura T."/>
            <person name="Hosouchi T."/>
            <person name="Matsuno A."/>
            <person name="Muraki A."/>
            <person name="Nakazaki N."/>
            <person name="Naruo K."/>
            <person name="Okumura S."/>
            <person name="Shimpo S."/>
            <person name="Takeuchi C."/>
            <person name="Wada T."/>
            <person name="Watanabe A."/>
            <person name="Yamada M."/>
            <person name="Yasuda M."/>
            <person name="Tabata S."/>
        </authorList>
    </citation>
    <scope>NUCLEOTIDE SEQUENCE [LARGE SCALE GENOMIC DNA]</scope>
    <source>
        <strain>ATCC 27184 / PCC 6803 / Kazusa</strain>
    </source>
</reference>